<name>FOLD_FLAJ1</name>
<accession>A5FNE3</accession>
<organism>
    <name type="scientific">Flavobacterium johnsoniae (strain ATCC 17061 / DSM 2064 / JCM 8514 / BCRC 14874 / CCUG 350202 / NBRC 14942 / NCIMB 11054 / UW101)</name>
    <name type="common">Cytophaga johnsonae</name>
    <dbReference type="NCBI Taxonomy" id="376686"/>
    <lineage>
        <taxon>Bacteria</taxon>
        <taxon>Pseudomonadati</taxon>
        <taxon>Bacteroidota</taxon>
        <taxon>Flavobacteriia</taxon>
        <taxon>Flavobacteriales</taxon>
        <taxon>Flavobacteriaceae</taxon>
        <taxon>Flavobacterium</taxon>
    </lineage>
</organism>
<comment type="function">
    <text evidence="1">Catalyzes the oxidation of 5,10-methylenetetrahydrofolate to 5,10-methenyltetrahydrofolate and then the hydrolysis of 5,10-methenyltetrahydrofolate to 10-formyltetrahydrofolate.</text>
</comment>
<comment type="catalytic activity">
    <reaction evidence="1">
        <text>(6R)-5,10-methylene-5,6,7,8-tetrahydrofolate + NADP(+) = (6R)-5,10-methenyltetrahydrofolate + NADPH</text>
        <dbReference type="Rhea" id="RHEA:22812"/>
        <dbReference type="ChEBI" id="CHEBI:15636"/>
        <dbReference type="ChEBI" id="CHEBI:57455"/>
        <dbReference type="ChEBI" id="CHEBI:57783"/>
        <dbReference type="ChEBI" id="CHEBI:58349"/>
        <dbReference type="EC" id="1.5.1.5"/>
    </reaction>
</comment>
<comment type="catalytic activity">
    <reaction evidence="1">
        <text>(6R)-5,10-methenyltetrahydrofolate + H2O = (6R)-10-formyltetrahydrofolate + H(+)</text>
        <dbReference type="Rhea" id="RHEA:23700"/>
        <dbReference type="ChEBI" id="CHEBI:15377"/>
        <dbReference type="ChEBI" id="CHEBI:15378"/>
        <dbReference type="ChEBI" id="CHEBI:57455"/>
        <dbReference type="ChEBI" id="CHEBI:195366"/>
        <dbReference type="EC" id="3.5.4.9"/>
    </reaction>
</comment>
<comment type="pathway">
    <text evidence="1">One-carbon metabolism; tetrahydrofolate interconversion.</text>
</comment>
<comment type="subunit">
    <text evidence="1">Homodimer.</text>
</comment>
<comment type="similarity">
    <text evidence="1">Belongs to the tetrahydrofolate dehydrogenase/cyclohydrolase family.</text>
</comment>
<proteinExistence type="inferred from homology"/>
<reference key="1">
    <citation type="journal article" date="2009" name="Appl. Environ. Microbiol.">
        <title>Novel features of the polysaccharide-digesting gliding bacterium Flavobacterium johnsoniae as revealed by genome sequence analysis.</title>
        <authorList>
            <person name="McBride M.J."/>
            <person name="Xie G."/>
            <person name="Martens E.C."/>
            <person name="Lapidus A."/>
            <person name="Henrissat B."/>
            <person name="Rhodes R.G."/>
            <person name="Goltsman E."/>
            <person name="Wang W."/>
            <person name="Xu J."/>
            <person name="Hunnicutt D.W."/>
            <person name="Staroscik A.M."/>
            <person name="Hoover T.R."/>
            <person name="Cheng Y.Q."/>
            <person name="Stein J.L."/>
        </authorList>
    </citation>
    <scope>NUCLEOTIDE SEQUENCE [LARGE SCALE GENOMIC DNA]</scope>
    <source>
        <strain>ATCC 17061 / DSM 2064 / JCM 8514 / BCRC 14874 / CCUG 350202 / NBRC 14942 / NCIMB 11054 / UW101</strain>
    </source>
</reference>
<protein>
    <recommendedName>
        <fullName evidence="1">Bifunctional protein FolD</fullName>
    </recommendedName>
    <domain>
        <recommendedName>
            <fullName evidence="1">Methylenetetrahydrofolate dehydrogenase</fullName>
            <ecNumber evidence="1">1.5.1.5</ecNumber>
        </recommendedName>
    </domain>
    <domain>
        <recommendedName>
            <fullName evidence="1">Methenyltetrahydrofolate cyclohydrolase</fullName>
            <ecNumber evidence="1">3.5.4.9</ecNumber>
        </recommendedName>
    </domain>
</protein>
<keyword id="KW-0028">Amino-acid biosynthesis</keyword>
<keyword id="KW-0368">Histidine biosynthesis</keyword>
<keyword id="KW-0378">Hydrolase</keyword>
<keyword id="KW-0486">Methionine biosynthesis</keyword>
<keyword id="KW-0511">Multifunctional enzyme</keyword>
<keyword id="KW-0521">NADP</keyword>
<keyword id="KW-0554">One-carbon metabolism</keyword>
<keyword id="KW-0560">Oxidoreductase</keyword>
<keyword id="KW-0658">Purine biosynthesis</keyword>
<evidence type="ECO:0000255" key="1">
    <source>
        <dbReference type="HAMAP-Rule" id="MF_01576"/>
    </source>
</evidence>
<gene>
    <name evidence="1" type="primary">folD</name>
    <name type="ordered locus">Fjoh_0243</name>
</gene>
<feature type="chain" id="PRO_1000087901" description="Bifunctional protein FolD">
    <location>
        <begin position="1"/>
        <end position="295"/>
    </location>
</feature>
<feature type="binding site" evidence="1">
    <location>
        <begin position="164"/>
        <end position="166"/>
    </location>
    <ligand>
        <name>NADP(+)</name>
        <dbReference type="ChEBI" id="CHEBI:58349"/>
    </ligand>
</feature>
<feature type="binding site" evidence="1">
    <location>
        <position position="193"/>
    </location>
    <ligand>
        <name>NADP(+)</name>
        <dbReference type="ChEBI" id="CHEBI:58349"/>
    </ligand>
</feature>
<feature type="binding site" evidence="1">
    <location>
        <position position="234"/>
    </location>
    <ligand>
        <name>NADP(+)</name>
        <dbReference type="ChEBI" id="CHEBI:58349"/>
    </ligand>
</feature>
<sequence>MQLLDGKKTSNDIKNEIAAEVQSIKAAGGKVPHLAAVLVGNNGASLTYVGSKVKSCQEIGFDSTLVSLPETITEDELLAKIKELNEDDNLDGYIVQLPLPKHIDEQKILLAIDPDKDVDGFHPTNFGRMALEMESFIPATPFGIMELLERYKVETAGKHTVVIGRSHIVGRPMSILMSRKGNPGDSTVTLTHSRTKDLAEFTKNADIIITALGVPEFLKADMVKEGVTVIDVGITRVEDASNAKGYVIKGDVDFEGVSKKASFITPVPGGVGPMTIAMLLKNTLLARKMRSAKNK</sequence>
<dbReference type="EC" id="1.5.1.5" evidence="1"/>
<dbReference type="EC" id="3.5.4.9" evidence="1"/>
<dbReference type="EMBL" id="CP000685">
    <property type="protein sequence ID" value="ABQ03280.1"/>
    <property type="molecule type" value="Genomic_DNA"/>
</dbReference>
<dbReference type="RefSeq" id="WP_012022350.1">
    <property type="nucleotide sequence ID" value="NZ_MUGZ01000005.1"/>
</dbReference>
<dbReference type="SMR" id="A5FNE3"/>
<dbReference type="STRING" id="376686.Fjoh_0243"/>
<dbReference type="KEGG" id="fjo:Fjoh_0243"/>
<dbReference type="eggNOG" id="COG0190">
    <property type="taxonomic scope" value="Bacteria"/>
</dbReference>
<dbReference type="HOGENOM" id="CLU_034045_2_1_10"/>
<dbReference type="OrthoDB" id="9803580at2"/>
<dbReference type="UniPathway" id="UPA00193"/>
<dbReference type="Proteomes" id="UP000006694">
    <property type="component" value="Chromosome"/>
</dbReference>
<dbReference type="GO" id="GO:0005829">
    <property type="term" value="C:cytosol"/>
    <property type="evidence" value="ECO:0007669"/>
    <property type="project" value="TreeGrafter"/>
</dbReference>
<dbReference type="GO" id="GO:0004477">
    <property type="term" value="F:methenyltetrahydrofolate cyclohydrolase activity"/>
    <property type="evidence" value="ECO:0007669"/>
    <property type="project" value="UniProtKB-UniRule"/>
</dbReference>
<dbReference type="GO" id="GO:0004488">
    <property type="term" value="F:methylenetetrahydrofolate dehydrogenase (NADP+) activity"/>
    <property type="evidence" value="ECO:0007669"/>
    <property type="project" value="UniProtKB-UniRule"/>
</dbReference>
<dbReference type="GO" id="GO:0000105">
    <property type="term" value="P:L-histidine biosynthetic process"/>
    <property type="evidence" value="ECO:0007669"/>
    <property type="project" value="UniProtKB-KW"/>
</dbReference>
<dbReference type="GO" id="GO:0009086">
    <property type="term" value="P:methionine biosynthetic process"/>
    <property type="evidence" value="ECO:0007669"/>
    <property type="project" value="UniProtKB-KW"/>
</dbReference>
<dbReference type="GO" id="GO:0006164">
    <property type="term" value="P:purine nucleotide biosynthetic process"/>
    <property type="evidence" value="ECO:0007669"/>
    <property type="project" value="UniProtKB-KW"/>
</dbReference>
<dbReference type="GO" id="GO:0035999">
    <property type="term" value="P:tetrahydrofolate interconversion"/>
    <property type="evidence" value="ECO:0007669"/>
    <property type="project" value="UniProtKB-UniRule"/>
</dbReference>
<dbReference type="CDD" id="cd01080">
    <property type="entry name" value="NAD_bind_m-THF_DH_Cyclohyd"/>
    <property type="match status" value="1"/>
</dbReference>
<dbReference type="FunFam" id="3.40.50.10860:FF:000001">
    <property type="entry name" value="Bifunctional protein FolD"/>
    <property type="match status" value="1"/>
</dbReference>
<dbReference type="FunFam" id="3.40.50.720:FF:000189">
    <property type="entry name" value="Bifunctional protein FolD"/>
    <property type="match status" value="1"/>
</dbReference>
<dbReference type="Gene3D" id="3.40.50.10860">
    <property type="entry name" value="Leucine Dehydrogenase, chain A, domain 1"/>
    <property type="match status" value="1"/>
</dbReference>
<dbReference type="Gene3D" id="3.40.50.720">
    <property type="entry name" value="NAD(P)-binding Rossmann-like Domain"/>
    <property type="match status" value="1"/>
</dbReference>
<dbReference type="HAMAP" id="MF_01576">
    <property type="entry name" value="THF_DHG_CYH"/>
    <property type="match status" value="1"/>
</dbReference>
<dbReference type="InterPro" id="IPR046346">
    <property type="entry name" value="Aminoacid_DH-like_N_sf"/>
</dbReference>
<dbReference type="InterPro" id="IPR036291">
    <property type="entry name" value="NAD(P)-bd_dom_sf"/>
</dbReference>
<dbReference type="InterPro" id="IPR000672">
    <property type="entry name" value="THF_DH/CycHdrlase"/>
</dbReference>
<dbReference type="InterPro" id="IPR020630">
    <property type="entry name" value="THF_DH/CycHdrlase_cat_dom"/>
</dbReference>
<dbReference type="InterPro" id="IPR020867">
    <property type="entry name" value="THF_DH/CycHdrlase_CS"/>
</dbReference>
<dbReference type="InterPro" id="IPR020631">
    <property type="entry name" value="THF_DH/CycHdrlase_NAD-bd_dom"/>
</dbReference>
<dbReference type="PANTHER" id="PTHR48099:SF5">
    <property type="entry name" value="C-1-TETRAHYDROFOLATE SYNTHASE, CYTOPLASMIC"/>
    <property type="match status" value="1"/>
</dbReference>
<dbReference type="PANTHER" id="PTHR48099">
    <property type="entry name" value="C-1-TETRAHYDROFOLATE SYNTHASE, CYTOPLASMIC-RELATED"/>
    <property type="match status" value="1"/>
</dbReference>
<dbReference type="Pfam" id="PF00763">
    <property type="entry name" value="THF_DHG_CYH"/>
    <property type="match status" value="1"/>
</dbReference>
<dbReference type="Pfam" id="PF02882">
    <property type="entry name" value="THF_DHG_CYH_C"/>
    <property type="match status" value="1"/>
</dbReference>
<dbReference type="PRINTS" id="PR00085">
    <property type="entry name" value="THFDHDRGNASE"/>
</dbReference>
<dbReference type="SUPFAM" id="SSF53223">
    <property type="entry name" value="Aminoacid dehydrogenase-like, N-terminal domain"/>
    <property type="match status" value="1"/>
</dbReference>
<dbReference type="SUPFAM" id="SSF51735">
    <property type="entry name" value="NAD(P)-binding Rossmann-fold domains"/>
    <property type="match status" value="1"/>
</dbReference>
<dbReference type="PROSITE" id="PS00767">
    <property type="entry name" value="THF_DHG_CYH_2"/>
    <property type="match status" value="1"/>
</dbReference>